<keyword id="KW-0025">Alternative splicing</keyword>
<keyword id="KW-1015">Disulfide bond</keyword>
<keyword id="KW-0325">Glycoprotein</keyword>
<keyword id="KW-0393">Immunoglobulin domain</keyword>
<keyword id="KW-0472">Membrane</keyword>
<keyword id="KW-1185">Reference proteome</keyword>
<keyword id="KW-0677">Repeat</keyword>
<keyword id="KW-0732">Signal</keyword>
<keyword id="KW-0812">Transmembrane</keyword>
<keyword id="KW-1133">Transmembrane helix</keyword>
<feature type="signal peptide" evidence="2">
    <location>
        <begin position="1"/>
        <end position="21"/>
    </location>
</feature>
<feature type="chain" id="PRO_5000271635" description="Selection and upkeep of intraepithelial T-cells protein 2">
    <location>
        <begin position="22"/>
        <end position="400"/>
    </location>
</feature>
<feature type="topological domain" description="Extracellular" evidence="2">
    <location>
        <begin position="22"/>
        <end position="240"/>
    </location>
</feature>
<feature type="transmembrane region" description="Helical" evidence="2">
    <location>
        <begin position="241"/>
        <end position="261"/>
    </location>
</feature>
<feature type="topological domain" description="Cytoplasmic" evidence="2">
    <location>
        <begin position="262"/>
        <end position="280"/>
    </location>
</feature>
<feature type="transmembrane region" description="Helical" evidence="2">
    <location>
        <begin position="281"/>
        <end position="301"/>
    </location>
</feature>
<feature type="topological domain" description="Extracellular" evidence="2">
    <location>
        <begin position="302"/>
        <end position="321"/>
    </location>
</feature>
<feature type="transmembrane region" description="Helical" evidence="2">
    <location>
        <begin position="322"/>
        <end position="342"/>
    </location>
</feature>
<feature type="topological domain" description="Cytoplasmic" evidence="2">
    <location>
        <begin position="343"/>
        <end position="400"/>
    </location>
</feature>
<feature type="domain" description="Ig-like V-type">
    <location>
        <begin position="23"/>
        <end position="133"/>
    </location>
</feature>
<feature type="domain" description="Ig-like C1-type">
    <location>
        <begin position="139"/>
        <end position="225"/>
    </location>
</feature>
<feature type="glycosylation site" description="N-linked (GlcNAc...) asparagine" evidence="2">
    <location>
        <position position="197"/>
    </location>
</feature>
<feature type="disulfide bond" evidence="3">
    <location>
        <begin position="46"/>
        <end position="120"/>
    </location>
</feature>
<feature type="disulfide bond" evidence="3">
    <location>
        <begin position="160"/>
        <end position="214"/>
    </location>
</feature>
<feature type="splice variant" id="VSP_034877" description="In isoform 2." evidence="5">
    <original>DHQGWSLPPYLSATPTAAICRLAVPEYSRGHLQLDSEDDLAGMGPSPFFITPCF</original>
    <variation>LTAITRRSSGVESATLSFCHSHCCYLPPSCSRVFTWSPAAGLRR</variation>
    <location>
        <begin position="347"/>
        <end position="400"/>
    </location>
</feature>
<feature type="splice variant" id="VSP_034878" description="In isoform 3." evidence="5">
    <original>DHQG</original>
    <variation>LKSD</variation>
    <location>
        <begin position="347"/>
        <end position="350"/>
    </location>
</feature>
<feature type="splice variant" id="VSP_034879" description="In isoform 3." evidence="5">
    <location>
        <begin position="351"/>
        <end position="400"/>
    </location>
</feature>
<feature type="sequence conflict" description="In Ref. 1; ABS30715." evidence="6" ref="1">
    <original>Q</original>
    <variation>H</variation>
    <location>
        <position position="16"/>
    </location>
</feature>
<feature type="sequence conflict" description="In Ref. 1; ABS30715." evidence="6" ref="1">
    <original>T</original>
    <variation>A</variation>
    <location>
        <position position="19"/>
    </location>
</feature>
<feature type="sequence conflict" description="In Ref. 1; ABS30715." evidence="6" ref="1">
    <original>T</original>
    <variation>M</variation>
    <location>
        <position position="201"/>
    </location>
</feature>
<feature type="sequence conflict" description="In Ref. 1; ABS30715." evidence="6" ref="1">
    <original>I</original>
    <variation>V</variation>
    <location>
        <position position="212"/>
    </location>
</feature>
<feature type="sequence conflict" description="In Ref. 1; ABS30715." evidence="6" ref="1">
    <original>Q</original>
    <variation>E</variation>
    <location>
        <position position="223"/>
    </location>
</feature>
<feature type="sequence conflict" description="In Ref. 1; ABS30715." evidence="6" ref="1">
    <original>S</original>
    <variation>R</variation>
    <location>
        <position position="226"/>
    </location>
</feature>
<feature type="sequence conflict" description="In Ref. 1; ABS30715." evidence="6" ref="1">
    <original>R</original>
    <variation>H</variation>
    <location>
        <position position="240"/>
    </location>
</feature>
<feature type="sequence conflict" description="In Ref. 1; ABS30715." evidence="6" ref="1">
    <original>T</original>
    <variation>S</variation>
    <location>
        <position position="270"/>
    </location>
</feature>
<feature type="sequence conflict" description="In Ref. 1; ABS30715." evidence="6" ref="1">
    <original>G</original>
    <variation>E</variation>
    <location>
        <position position="274"/>
    </location>
</feature>
<feature type="sequence conflict" description="In Ref. 1; ABS30715." evidence="6" ref="1">
    <original>I</original>
    <variation>V</variation>
    <location>
        <position position="284"/>
    </location>
</feature>
<feature type="sequence conflict" description="In Ref. 1; ABS30715." evidence="6" ref="1">
    <original>L</original>
    <variation>R</variation>
    <location>
        <position position="319"/>
    </location>
</feature>
<feature type="sequence conflict" description="In Ref. 1; ABS30715." evidence="6" ref="1">
    <original>D</original>
    <variation>G</variation>
    <location sequence="A7XUX6-3">
        <position position="350"/>
    </location>
</feature>
<reference key="1">
    <citation type="journal article" date="2008" name="Nat. Genet.">
        <title>Skint1, the prototype of a newly identified immunoglobulin superfamily gene cluster, positively selects epidermal gammadelta T cells.</title>
        <authorList>
            <person name="Boyden L.M."/>
            <person name="Lewis J.M."/>
            <person name="Barbee S.D."/>
            <person name="Bas A."/>
            <person name="Girardi M."/>
            <person name="Hayday A.C."/>
            <person name="Tigelaar R.E."/>
            <person name="Lifton R.P."/>
        </authorList>
    </citation>
    <scope>NUCLEOTIDE SEQUENCE [MRNA] (ISOFORMS 1; 2 AND 3)</scope>
    <scope>TISSUE SPECIFICITY</scope>
    <source>
        <strain>C57BL/6J</strain>
        <strain>FVB/NJ</strain>
    </source>
</reference>
<sequence length="400" mass="45644">MGATGVLLCVVLHFLQMVTQSSEKFTVTGLQRPVLAPLGGNVELSCQLSPPQQAQHMEIRWFRNRYREPVYLYRNGKDLHGETISKYVERTELLKDDIGKGKVTLRIFKLTADDDGSYHCVFKVGEFYEEHITEIKVTATSSVMYILMQPPNIKGVMLECHSGGWFPQPHMEWRDNKGNIIPATSKAHSQDENKLFNMTMTLLIEASSHRSITCYLQNLLTHQEESISIVLSGELFSWKRVWIMILTTIGFMMIAFCMTYCVQQHLLYGTFSKGKCHWLKSTMIFMFSVIAVTGVMLILHLKQRVPVSDQHFELDTLWLEDISVILCVLIVFIIKLISFIYFRLEGDHQGWSLPPYLSATPTAAICRLAVPEYSRGHLQLDSEDDLAGMGPSPFFITPCF</sequence>
<gene>
    <name type="primary">Skint2</name>
</gene>
<protein>
    <recommendedName>
        <fullName>Selection and upkeep of intraepithelial T-cells protein 2</fullName>
        <shortName>Skint-2</shortName>
    </recommendedName>
</protein>
<dbReference type="EMBL" id="EF494892">
    <property type="protein sequence ID" value="ABS30714.1"/>
    <property type="molecule type" value="mRNA"/>
</dbReference>
<dbReference type="EMBL" id="EF494893">
    <property type="protein sequence ID" value="ABS30715.1"/>
    <property type="molecule type" value="mRNA"/>
</dbReference>
<dbReference type="EMBL" id="EU099299">
    <property type="protein sequence ID" value="ABU87897.1"/>
    <property type="molecule type" value="mRNA"/>
</dbReference>
<dbReference type="EMBL" id="EU099300">
    <property type="protein sequence ID" value="ABU87898.1"/>
    <property type="molecule type" value="mRNA"/>
</dbReference>
<dbReference type="CCDS" id="CCDS38840.2">
    <molecule id="A7XUX6-1"/>
</dbReference>
<dbReference type="RefSeq" id="NP_001272892.1">
    <molecule id="A7XUX6-1"/>
    <property type="nucleotide sequence ID" value="NM_001285963.2"/>
</dbReference>
<dbReference type="RefSeq" id="NP_001272894.1">
    <molecule id="A7XUX6-2"/>
    <property type="nucleotide sequence ID" value="NM_001285965.2"/>
</dbReference>
<dbReference type="SMR" id="A7XUX6"/>
<dbReference type="FunCoup" id="A7XUX6">
    <property type="interactions" value="374"/>
</dbReference>
<dbReference type="STRING" id="10090.ENSMUSP00000139831"/>
<dbReference type="GlyCosmos" id="A7XUX6">
    <property type="glycosylation" value="1 site, No reported glycans"/>
</dbReference>
<dbReference type="GlyGen" id="A7XUX6">
    <property type="glycosylation" value="1 site"/>
</dbReference>
<dbReference type="jPOST" id="A7XUX6"/>
<dbReference type="PaxDb" id="10090-ENSMUSP00000139831"/>
<dbReference type="DNASU" id="329919"/>
<dbReference type="Ensembl" id="ENSMUST00000186969.2">
    <molecule id="A7XUX6-1"/>
    <property type="protein sequence ID" value="ENSMUSP00000139831.2"/>
    <property type="gene ID" value="ENSMUSG00000034359.17"/>
</dbReference>
<dbReference type="GeneID" id="329919"/>
<dbReference type="KEGG" id="mmu:329919"/>
<dbReference type="UCSC" id="uc029uys.1">
    <molecule id="A7XUX6-2"/>
    <property type="organism name" value="mouse"/>
</dbReference>
<dbReference type="UCSC" id="uc033idr.1">
    <molecule id="A7XUX6-1"/>
    <property type="organism name" value="mouse"/>
</dbReference>
<dbReference type="AGR" id="MGI:3649629"/>
<dbReference type="CTD" id="329919"/>
<dbReference type="MGI" id="MGI:3649629">
    <property type="gene designation" value="Skint2"/>
</dbReference>
<dbReference type="VEuPathDB" id="HostDB:ENSMUSG00000034359"/>
<dbReference type="eggNOG" id="ENOG502SEQH">
    <property type="taxonomic scope" value="Eukaryota"/>
</dbReference>
<dbReference type="GeneTree" id="ENSGT00940000162562"/>
<dbReference type="HOGENOM" id="CLU_013137_8_7_1"/>
<dbReference type="InParanoid" id="A7XUX6"/>
<dbReference type="OMA" id="ANGIEGP"/>
<dbReference type="OrthoDB" id="9986391at2759"/>
<dbReference type="PhylomeDB" id="A7XUX6"/>
<dbReference type="BioGRID-ORCS" id="329919">
    <property type="hits" value="4 hits in 73 CRISPR screens"/>
</dbReference>
<dbReference type="PRO" id="PR:A7XUX6"/>
<dbReference type="Proteomes" id="UP000000589">
    <property type="component" value="Chromosome 4"/>
</dbReference>
<dbReference type="RNAct" id="A7XUX6">
    <property type="molecule type" value="protein"/>
</dbReference>
<dbReference type="Bgee" id="ENSMUSG00000034359">
    <property type="expression patterns" value="Expressed in zone of skin and 11 other cell types or tissues"/>
</dbReference>
<dbReference type="ExpressionAtlas" id="A7XUX6">
    <property type="expression patterns" value="baseline and differential"/>
</dbReference>
<dbReference type="GO" id="GO:0016020">
    <property type="term" value="C:membrane"/>
    <property type="evidence" value="ECO:0007669"/>
    <property type="project" value="UniProtKB-SubCell"/>
</dbReference>
<dbReference type="GO" id="GO:0005102">
    <property type="term" value="F:signaling receptor binding"/>
    <property type="evidence" value="ECO:0000314"/>
    <property type="project" value="MGI"/>
</dbReference>
<dbReference type="GO" id="GO:0042608">
    <property type="term" value="F:T cell receptor binding"/>
    <property type="evidence" value="ECO:0000314"/>
    <property type="project" value="MGI"/>
</dbReference>
<dbReference type="GO" id="GO:0050868">
    <property type="term" value="P:negative regulation of T cell activation"/>
    <property type="evidence" value="ECO:0000314"/>
    <property type="project" value="MGI"/>
</dbReference>
<dbReference type="GO" id="GO:0042110">
    <property type="term" value="P:T cell activation"/>
    <property type="evidence" value="ECO:0000314"/>
    <property type="project" value="MGI"/>
</dbReference>
<dbReference type="CDD" id="cd05713">
    <property type="entry name" value="IgV_MOG_like"/>
    <property type="match status" value="1"/>
</dbReference>
<dbReference type="FunFam" id="2.60.40.10:FF:000088">
    <property type="entry name" value="Butyrophilin subfamily 1 member A1"/>
    <property type="match status" value="1"/>
</dbReference>
<dbReference type="FunFam" id="2.60.40.10:FF:000142">
    <property type="entry name" value="V-set domain-containing T-cell activation inhibitor 1"/>
    <property type="match status" value="1"/>
</dbReference>
<dbReference type="Gene3D" id="2.60.40.10">
    <property type="entry name" value="Immunoglobulins"/>
    <property type="match status" value="2"/>
</dbReference>
<dbReference type="InterPro" id="IPR053896">
    <property type="entry name" value="BTN3A2-like_Ig-C"/>
</dbReference>
<dbReference type="InterPro" id="IPR007110">
    <property type="entry name" value="Ig-like_dom"/>
</dbReference>
<dbReference type="InterPro" id="IPR036179">
    <property type="entry name" value="Ig-like_dom_sf"/>
</dbReference>
<dbReference type="InterPro" id="IPR013783">
    <property type="entry name" value="Ig-like_fold"/>
</dbReference>
<dbReference type="InterPro" id="IPR003599">
    <property type="entry name" value="Ig_sub"/>
</dbReference>
<dbReference type="InterPro" id="IPR013106">
    <property type="entry name" value="Ig_V-set"/>
</dbReference>
<dbReference type="InterPro" id="IPR050504">
    <property type="entry name" value="IgSF_BTN/MOG"/>
</dbReference>
<dbReference type="PANTHER" id="PTHR24100">
    <property type="entry name" value="BUTYROPHILIN"/>
    <property type="match status" value="1"/>
</dbReference>
<dbReference type="PANTHER" id="PTHR24100:SF102">
    <property type="entry name" value="SELECTION AND UPKEEP OF INTRAEPITHELIAL T-CELLS PROTEIN 2-RELATED"/>
    <property type="match status" value="1"/>
</dbReference>
<dbReference type="Pfam" id="PF22705">
    <property type="entry name" value="C2-set_3"/>
    <property type="match status" value="1"/>
</dbReference>
<dbReference type="Pfam" id="PF07686">
    <property type="entry name" value="V-set"/>
    <property type="match status" value="1"/>
</dbReference>
<dbReference type="SMART" id="SM00409">
    <property type="entry name" value="IG"/>
    <property type="match status" value="1"/>
</dbReference>
<dbReference type="SMART" id="SM00406">
    <property type="entry name" value="IGv"/>
    <property type="match status" value="1"/>
</dbReference>
<dbReference type="SUPFAM" id="SSF48726">
    <property type="entry name" value="Immunoglobulin"/>
    <property type="match status" value="2"/>
</dbReference>
<dbReference type="PROSITE" id="PS50835">
    <property type="entry name" value="IG_LIKE"/>
    <property type="match status" value="2"/>
</dbReference>
<comment type="function">
    <text evidence="1">May act by engaging a cell surface molecule on immature T-cells in the embryonic thymus.</text>
</comment>
<comment type="subcellular location">
    <subcellularLocation>
        <location evidence="6">Membrane</location>
        <topology evidence="6">Multi-pass membrane protein</topology>
    </subcellularLocation>
</comment>
<comment type="alternative products">
    <event type="alternative splicing"/>
    <isoform>
        <id>A7XUX6-1</id>
        <name>1</name>
        <name>A</name>
        <sequence type="displayed"/>
    </isoform>
    <isoform>
        <id>A7XUX6-2</id>
        <name>2</name>
        <name>B</name>
        <sequence type="described" ref="VSP_034877"/>
    </isoform>
    <isoform>
        <id>A7XUX6-3</id>
        <name>3</name>
        <name>C</name>
        <sequence type="described" ref="VSP_034878 VSP_034879"/>
    </isoform>
</comment>
<comment type="tissue specificity">
    <text evidence="4">Expressed in skin, thymus and mammary gland.</text>
</comment>
<comment type="miscellaneous">
    <text>Encoded by one of the 11 copies of Skint genes clustered in the D1 region of the chromosome 4.</text>
</comment>
<comment type="similarity">
    <text evidence="6">Belongs to the SKINT family.</text>
</comment>
<organism>
    <name type="scientific">Mus musculus</name>
    <name type="common">Mouse</name>
    <dbReference type="NCBI Taxonomy" id="10090"/>
    <lineage>
        <taxon>Eukaryota</taxon>
        <taxon>Metazoa</taxon>
        <taxon>Chordata</taxon>
        <taxon>Craniata</taxon>
        <taxon>Vertebrata</taxon>
        <taxon>Euteleostomi</taxon>
        <taxon>Mammalia</taxon>
        <taxon>Eutheria</taxon>
        <taxon>Euarchontoglires</taxon>
        <taxon>Glires</taxon>
        <taxon>Rodentia</taxon>
        <taxon>Myomorpha</taxon>
        <taxon>Muroidea</taxon>
        <taxon>Muridae</taxon>
        <taxon>Murinae</taxon>
        <taxon>Mus</taxon>
        <taxon>Mus</taxon>
    </lineage>
</organism>
<proteinExistence type="evidence at transcript level"/>
<name>SKIT2_MOUSE</name>
<evidence type="ECO:0000250" key="1"/>
<evidence type="ECO:0000255" key="2"/>
<evidence type="ECO:0000255" key="3">
    <source>
        <dbReference type="PROSITE-ProRule" id="PRU00114"/>
    </source>
</evidence>
<evidence type="ECO:0000269" key="4">
    <source>
    </source>
</evidence>
<evidence type="ECO:0000303" key="5">
    <source>
    </source>
</evidence>
<evidence type="ECO:0000305" key="6"/>
<accession>A7XUX6</accession>
<accession>A7TZE8</accession>
<accession>A7TZE9</accession>
<accession>A7XUY1</accession>